<evidence type="ECO:0000255" key="1">
    <source>
        <dbReference type="HAMAP-Rule" id="MF_00076"/>
    </source>
</evidence>
<keyword id="KW-0028">Amino-acid biosynthesis</keyword>
<keyword id="KW-0963">Cytoplasm</keyword>
<keyword id="KW-0368">Histidine biosynthesis</keyword>
<keyword id="KW-0456">Lyase</keyword>
<keyword id="KW-1185">Reference proteome</keyword>
<gene>
    <name evidence="1" type="primary">hisB</name>
    <name type="ordered locus">MCA2805</name>
</gene>
<name>HIS7_METCA</name>
<dbReference type="EC" id="4.2.1.19" evidence="1"/>
<dbReference type="EMBL" id="AE017282">
    <property type="protein sequence ID" value="AAU91068.1"/>
    <property type="molecule type" value="Genomic_DNA"/>
</dbReference>
<dbReference type="RefSeq" id="WP_010962006.1">
    <property type="nucleotide sequence ID" value="NC_002977.6"/>
</dbReference>
<dbReference type="SMR" id="Q603K0"/>
<dbReference type="STRING" id="243233.MCA2805"/>
<dbReference type="GeneID" id="88224981"/>
<dbReference type="KEGG" id="mca:MCA2805"/>
<dbReference type="eggNOG" id="COG0131">
    <property type="taxonomic scope" value="Bacteria"/>
</dbReference>
<dbReference type="HOGENOM" id="CLU_044308_3_0_6"/>
<dbReference type="UniPathway" id="UPA00031">
    <property type="reaction ID" value="UER00011"/>
</dbReference>
<dbReference type="Proteomes" id="UP000006821">
    <property type="component" value="Chromosome"/>
</dbReference>
<dbReference type="GO" id="GO:0005737">
    <property type="term" value="C:cytoplasm"/>
    <property type="evidence" value="ECO:0007669"/>
    <property type="project" value="UniProtKB-SubCell"/>
</dbReference>
<dbReference type="GO" id="GO:0004424">
    <property type="term" value="F:imidazoleglycerol-phosphate dehydratase activity"/>
    <property type="evidence" value="ECO:0007669"/>
    <property type="project" value="UniProtKB-UniRule"/>
</dbReference>
<dbReference type="GO" id="GO:0000105">
    <property type="term" value="P:L-histidine biosynthetic process"/>
    <property type="evidence" value="ECO:0007669"/>
    <property type="project" value="UniProtKB-UniRule"/>
</dbReference>
<dbReference type="CDD" id="cd07914">
    <property type="entry name" value="IGPD"/>
    <property type="match status" value="1"/>
</dbReference>
<dbReference type="FunFam" id="3.30.230.40:FF:000001">
    <property type="entry name" value="Imidazoleglycerol-phosphate dehydratase HisB"/>
    <property type="match status" value="1"/>
</dbReference>
<dbReference type="FunFam" id="3.30.230.40:FF:000003">
    <property type="entry name" value="Imidazoleglycerol-phosphate dehydratase HisB"/>
    <property type="match status" value="1"/>
</dbReference>
<dbReference type="Gene3D" id="3.30.230.40">
    <property type="entry name" value="Imidazole glycerol phosphate dehydratase, domain 1"/>
    <property type="match status" value="2"/>
</dbReference>
<dbReference type="HAMAP" id="MF_00076">
    <property type="entry name" value="HisB"/>
    <property type="match status" value="1"/>
</dbReference>
<dbReference type="InterPro" id="IPR038494">
    <property type="entry name" value="IGPD_sf"/>
</dbReference>
<dbReference type="InterPro" id="IPR000807">
    <property type="entry name" value="ImidazoleglycerolP_deHydtase"/>
</dbReference>
<dbReference type="InterPro" id="IPR020565">
    <property type="entry name" value="ImidazoleglycerP_deHydtase_CS"/>
</dbReference>
<dbReference type="InterPro" id="IPR020568">
    <property type="entry name" value="Ribosomal_Su5_D2-typ_SF"/>
</dbReference>
<dbReference type="NCBIfam" id="NF002106">
    <property type="entry name" value="PRK00951.1-1"/>
    <property type="match status" value="1"/>
</dbReference>
<dbReference type="NCBIfam" id="NF002109">
    <property type="entry name" value="PRK00951.1-5"/>
    <property type="match status" value="1"/>
</dbReference>
<dbReference type="NCBIfam" id="NF002111">
    <property type="entry name" value="PRK00951.2-1"/>
    <property type="match status" value="1"/>
</dbReference>
<dbReference type="NCBIfam" id="NF002114">
    <property type="entry name" value="PRK00951.2-4"/>
    <property type="match status" value="1"/>
</dbReference>
<dbReference type="PANTHER" id="PTHR23133:SF2">
    <property type="entry name" value="IMIDAZOLEGLYCEROL-PHOSPHATE DEHYDRATASE"/>
    <property type="match status" value="1"/>
</dbReference>
<dbReference type="PANTHER" id="PTHR23133">
    <property type="entry name" value="IMIDAZOLEGLYCEROL-PHOSPHATE DEHYDRATASE HIS7"/>
    <property type="match status" value="1"/>
</dbReference>
<dbReference type="Pfam" id="PF00475">
    <property type="entry name" value="IGPD"/>
    <property type="match status" value="1"/>
</dbReference>
<dbReference type="SUPFAM" id="SSF54211">
    <property type="entry name" value="Ribosomal protein S5 domain 2-like"/>
    <property type="match status" value="2"/>
</dbReference>
<dbReference type="PROSITE" id="PS00954">
    <property type="entry name" value="IGP_DEHYDRATASE_1"/>
    <property type="match status" value="1"/>
</dbReference>
<dbReference type="PROSITE" id="PS00955">
    <property type="entry name" value="IGP_DEHYDRATASE_2"/>
    <property type="match status" value="1"/>
</dbReference>
<accession>Q603K0</accession>
<protein>
    <recommendedName>
        <fullName evidence="1">Imidazoleglycerol-phosphate dehydratase</fullName>
        <shortName evidence="1">IGPD</shortName>
        <ecNumber evidence="1">4.2.1.19</ecNumber>
    </recommendedName>
</protein>
<feature type="chain" id="PRO_0000158142" description="Imidazoleglycerol-phosphate dehydratase">
    <location>
        <begin position="1"/>
        <end position="197"/>
    </location>
</feature>
<organism>
    <name type="scientific">Methylococcus capsulatus (strain ATCC 33009 / NCIMB 11132 / Bath)</name>
    <dbReference type="NCBI Taxonomy" id="243233"/>
    <lineage>
        <taxon>Bacteria</taxon>
        <taxon>Pseudomonadati</taxon>
        <taxon>Pseudomonadota</taxon>
        <taxon>Gammaproteobacteria</taxon>
        <taxon>Methylococcales</taxon>
        <taxon>Methylococcaceae</taxon>
        <taxon>Methylococcus</taxon>
    </lineage>
</organism>
<proteinExistence type="inferred from homology"/>
<comment type="catalytic activity">
    <reaction evidence="1">
        <text>D-erythro-1-(imidazol-4-yl)glycerol 3-phosphate = 3-(imidazol-4-yl)-2-oxopropyl phosphate + H2O</text>
        <dbReference type="Rhea" id="RHEA:11040"/>
        <dbReference type="ChEBI" id="CHEBI:15377"/>
        <dbReference type="ChEBI" id="CHEBI:57766"/>
        <dbReference type="ChEBI" id="CHEBI:58278"/>
        <dbReference type="EC" id="4.2.1.19"/>
    </reaction>
</comment>
<comment type="pathway">
    <text evidence="1">Amino-acid biosynthesis; L-histidine biosynthesis; L-histidine from 5-phospho-alpha-D-ribose 1-diphosphate: step 6/9.</text>
</comment>
<comment type="subcellular location">
    <subcellularLocation>
        <location evidence="1">Cytoplasm</location>
    </subcellularLocation>
</comment>
<comment type="similarity">
    <text evidence="1">Belongs to the imidazoleglycerol-phosphate dehydratase family.</text>
</comment>
<reference key="1">
    <citation type="journal article" date="2004" name="PLoS Biol.">
        <title>Genomic insights into methanotrophy: the complete genome sequence of Methylococcus capsulatus (Bath).</title>
        <authorList>
            <person name="Ward N.L."/>
            <person name="Larsen O."/>
            <person name="Sakwa J."/>
            <person name="Bruseth L."/>
            <person name="Khouri H.M."/>
            <person name="Durkin A.S."/>
            <person name="Dimitrov G."/>
            <person name="Jiang L."/>
            <person name="Scanlan D."/>
            <person name="Kang K.H."/>
            <person name="Lewis M.R."/>
            <person name="Nelson K.E."/>
            <person name="Methe B.A."/>
            <person name="Wu M."/>
            <person name="Heidelberg J.F."/>
            <person name="Paulsen I.T."/>
            <person name="Fouts D.E."/>
            <person name="Ravel J."/>
            <person name="Tettelin H."/>
            <person name="Ren Q."/>
            <person name="Read T.D."/>
            <person name="DeBoy R.T."/>
            <person name="Seshadri R."/>
            <person name="Salzberg S.L."/>
            <person name="Jensen H.B."/>
            <person name="Birkeland N.K."/>
            <person name="Nelson W.C."/>
            <person name="Dodson R.J."/>
            <person name="Grindhaug S.H."/>
            <person name="Holt I.E."/>
            <person name="Eidhammer I."/>
            <person name="Jonasen I."/>
            <person name="Vanaken S."/>
            <person name="Utterback T.R."/>
            <person name="Feldblyum T.V."/>
            <person name="Fraser C.M."/>
            <person name="Lillehaug J.R."/>
            <person name="Eisen J.A."/>
        </authorList>
    </citation>
    <scope>NUCLEOTIDE SEQUENCE [LARGE SCALE GENOMIC DNA]</scope>
    <source>
        <strain>ATCC 33009 / NCIMB 11132 / Bath</strain>
    </source>
</reference>
<sequence length="197" mass="22006">MNRRTAEVERYTLETQIRVQVDLDGTGKGKFRSGVHFLDHMLDQVARHGCMDLEVEAKGDLHIDAHHTVEDIGIALGQAFAKALGDKRGIHRYGHAYVPLDEALSRVVIDFSGRSGLFYEVEFPRDRIGDFEVDLFVEFFRGFVNHAQATLHIDNLKGLNAHHVAETIFKAFGRAVRAAVERDARTAGVLPSTKGLL</sequence>